<reference key="1">
    <citation type="journal article" date="1997" name="Mol. Biol. Evol.">
        <title>The mtDNA sequence of the ostrich and the divergence between paleognathous and neognathous birds.</title>
        <authorList>
            <person name="Harlid A."/>
            <person name="Janke A."/>
            <person name="Arnason U."/>
        </authorList>
    </citation>
    <scope>NUCLEOTIDE SEQUENCE [GENOMIC DNA]</scope>
</reference>
<reference key="2">
    <citation type="journal article" date="2001" name="Proc. R. Soc. B">
        <title>Complete mitochondrial DNA genome sequences of extinct birds: ratite phylogenetics and the vicariance biogeography hypothesis.</title>
        <authorList>
            <person name="Haddrath O."/>
            <person name="Baker A.J."/>
        </authorList>
    </citation>
    <scope>NUCLEOTIDE SEQUENCE [GENOMIC DNA]</scope>
</reference>
<gene>
    <name type="primary">MT-CO3</name>
    <name type="synonym">COIII</name>
    <name type="synonym">COXIII</name>
    <name type="synonym">MTCO3</name>
</gene>
<protein>
    <recommendedName>
        <fullName>Cytochrome c oxidase subunit 3</fullName>
        <ecNumber>7.1.1.9</ecNumber>
    </recommendedName>
    <alternativeName>
        <fullName>Cytochrome c oxidase polypeptide III</fullName>
    </alternativeName>
</protein>
<feature type="chain" id="PRO_0000183857" description="Cytochrome c oxidase subunit 3">
    <location>
        <begin position="1"/>
        <end position="261"/>
    </location>
</feature>
<feature type="topological domain" description="Mitochondrial matrix" evidence="1">
    <location>
        <begin position="1"/>
        <end position="15"/>
    </location>
</feature>
<feature type="transmembrane region" description="Helical; Name=I" evidence="1">
    <location>
        <begin position="16"/>
        <end position="34"/>
    </location>
</feature>
<feature type="topological domain" description="Mitochondrial intermembrane" evidence="1">
    <location>
        <begin position="35"/>
        <end position="40"/>
    </location>
</feature>
<feature type="transmembrane region" description="Helical; Name=II" evidence="1">
    <location>
        <begin position="41"/>
        <end position="66"/>
    </location>
</feature>
<feature type="topological domain" description="Mitochondrial matrix" evidence="1">
    <location>
        <begin position="67"/>
        <end position="72"/>
    </location>
</feature>
<feature type="transmembrane region" description="Helical; Name=III" evidence="1">
    <location>
        <begin position="73"/>
        <end position="105"/>
    </location>
</feature>
<feature type="topological domain" description="Mitochondrial intermembrane" evidence="1">
    <location>
        <begin position="106"/>
        <end position="128"/>
    </location>
</feature>
<feature type="transmembrane region" description="Helical; Name=IV" evidence="1">
    <location>
        <begin position="129"/>
        <end position="152"/>
    </location>
</feature>
<feature type="topological domain" description="Mitochondrial matrix" evidence="1">
    <location>
        <begin position="153"/>
        <end position="155"/>
    </location>
</feature>
<feature type="transmembrane region" description="Helical; Name=V" evidence="1">
    <location>
        <begin position="156"/>
        <end position="183"/>
    </location>
</feature>
<feature type="topological domain" description="Mitochondrial intermembrane" evidence="1">
    <location>
        <begin position="184"/>
        <end position="190"/>
    </location>
</feature>
<feature type="transmembrane region" description="Helical; Name=VI" evidence="1">
    <location>
        <begin position="191"/>
        <end position="223"/>
    </location>
</feature>
<feature type="topological domain" description="Mitochondrial matrix" evidence="1">
    <location>
        <begin position="224"/>
        <end position="232"/>
    </location>
</feature>
<feature type="transmembrane region" description="Helical; Name=VII" evidence="1">
    <location>
        <begin position="233"/>
        <end position="256"/>
    </location>
</feature>
<feature type="topological domain" description="Mitochondrial intermembrane" evidence="1">
    <location>
        <begin position="257"/>
        <end position="261"/>
    </location>
</feature>
<feature type="sequence conflict" description="In Ref. 1; CAA72750." evidence="3" ref="1">
    <original>I</original>
    <variation>V</variation>
    <location>
        <position position="55"/>
    </location>
</feature>
<feature type="sequence conflict" description="In Ref. 1; CAA72750." evidence="3" ref="1">
    <original>A</original>
    <variation>P</variation>
    <location>
        <position position="107"/>
    </location>
</feature>
<organism>
    <name type="scientific">Struthio camelus</name>
    <name type="common">Common ostrich</name>
    <dbReference type="NCBI Taxonomy" id="8801"/>
    <lineage>
        <taxon>Eukaryota</taxon>
        <taxon>Metazoa</taxon>
        <taxon>Chordata</taxon>
        <taxon>Craniata</taxon>
        <taxon>Vertebrata</taxon>
        <taxon>Euteleostomi</taxon>
        <taxon>Archelosauria</taxon>
        <taxon>Archosauria</taxon>
        <taxon>Dinosauria</taxon>
        <taxon>Saurischia</taxon>
        <taxon>Theropoda</taxon>
        <taxon>Coelurosauria</taxon>
        <taxon>Aves</taxon>
        <taxon>Palaeognathae</taxon>
        <taxon>Struthioniformes</taxon>
        <taxon>Struthionidae</taxon>
        <taxon>Struthio</taxon>
    </lineage>
</organism>
<dbReference type="EC" id="7.1.1.9"/>
<dbReference type="EMBL" id="Y12025">
    <property type="protein sequence ID" value="CAA72750.1"/>
    <property type="molecule type" value="Genomic_DNA"/>
</dbReference>
<dbReference type="EMBL" id="AF338715">
    <property type="protein sequence ID" value="AAK53349.1"/>
    <property type="molecule type" value="Genomic_DNA"/>
</dbReference>
<dbReference type="PIR" id="G90612">
    <property type="entry name" value="G90612"/>
</dbReference>
<dbReference type="PIR" id="T11525">
    <property type="entry name" value="T11525"/>
</dbReference>
<dbReference type="SMR" id="O21403"/>
<dbReference type="CTD" id="4514"/>
<dbReference type="GO" id="GO:0005743">
    <property type="term" value="C:mitochondrial inner membrane"/>
    <property type="evidence" value="ECO:0007669"/>
    <property type="project" value="UniProtKB-SubCell"/>
</dbReference>
<dbReference type="GO" id="GO:0045277">
    <property type="term" value="C:respiratory chain complex IV"/>
    <property type="evidence" value="ECO:0000250"/>
    <property type="project" value="UniProtKB"/>
</dbReference>
<dbReference type="GO" id="GO:0004129">
    <property type="term" value="F:cytochrome-c oxidase activity"/>
    <property type="evidence" value="ECO:0007669"/>
    <property type="project" value="UniProtKB-EC"/>
</dbReference>
<dbReference type="GO" id="GO:0006123">
    <property type="term" value="P:mitochondrial electron transport, cytochrome c to oxygen"/>
    <property type="evidence" value="ECO:0007669"/>
    <property type="project" value="TreeGrafter"/>
</dbReference>
<dbReference type="CDD" id="cd01665">
    <property type="entry name" value="Cyt_c_Oxidase_III"/>
    <property type="match status" value="1"/>
</dbReference>
<dbReference type="FunFam" id="1.10.287.70:FF:000048">
    <property type="entry name" value="Cytochrome c oxidase subunit 3"/>
    <property type="match status" value="1"/>
</dbReference>
<dbReference type="FunFam" id="1.20.120.80:FF:000002">
    <property type="entry name" value="Cytochrome c oxidase subunit 3"/>
    <property type="match status" value="1"/>
</dbReference>
<dbReference type="Gene3D" id="1.10.287.70">
    <property type="match status" value="1"/>
</dbReference>
<dbReference type="Gene3D" id="1.20.120.80">
    <property type="entry name" value="Cytochrome c oxidase, subunit III, four-helix bundle"/>
    <property type="match status" value="1"/>
</dbReference>
<dbReference type="InterPro" id="IPR024791">
    <property type="entry name" value="Cyt_c/ubiquinol_Oxase_su3"/>
</dbReference>
<dbReference type="InterPro" id="IPR033945">
    <property type="entry name" value="Cyt_c_oxase_su3_dom"/>
</dbReference>
<dbReference type="InterPro" id="IPR000298">
    <property type="entry name" value="Cyt_c_oxidase-like_su3"/>
</dbReference>
<dbReference type="InterPro" id="IPR035973">
    <property type="entry name" value="Cyt_c_oxidase_su3-like_sf"/>
</dbReference>
<dbReference type="InterPro" id="IPR013833">
    <property type="entry name" value="Cyt_c_oxidase_su3_a-hlx"/>
</dbReference>
<dbReference type="PANTHER" id="PTHR11403:SF7">
    <property type="entry name" value="CYTOCHROME C OXIDASE SUBUNIT 3"/>
    <property type="match status" value="1"/>
</dbReference>
<dbReference type="PANTHER" id="PTHR11403">
    <property type="entry name" value="CYTOCHROME C OXIDASE SUBUNIT III"/>
    <property type="match status" value="1"/>
</dbReference>
<dbReference type="Pfam" id="PF00510">
    <property type="entry name" value="COX3"/>
    <property type="match status" value="1"/>
</dbReference>
<dbReference type="SUPFAM" id="SSF81452">
    <property type="entry name" value="Cytochrome c oxidase subunit III-like"/>
    <property type="match status" value="1"/>
</dbReference>
<dbReference type="PROSITE" id="PS50253">
    <property type="entry name" value="COX3"/>
    <property type="match status" value="1"/>
</dbReference>
<geneLocation type="mitochondrion"/>
<comment type="function">
    <text evidence="2">Component of the cytochrome c oxidase, the last enzyme in the mitochondrial electron transport chain which drives oxidative phosphorylation. The respiratory chain contains 3 multisubunit complexes succinate dehydrogenase (complex II, CII), ubiquinol-cytochrome c oxidoreductase (cytochrome b-c1 complex, complex III, CIII) and cytochrome c oxidase (complex IV, CIV), that cooperate to transfer electrons derived from NADH and succinate to molecular oxygen, creating an electrochemical gradient over the inner membrane that drives transmembrane transport and the ATP synthase. Cytochrome c oxidase is the component of the respiratory chain that catalyzes the reduction of oxygen to water. Electrons originating from reduced cytochrome c in the intermembrane space (IMS) are transferred via the dinuclear copper A center (CU(A)) of subunit 2 and heme A of subunit 1 to the active site in subunit 1, a binuclear center (BNC) formed by heme A3 and copper B (CU(B)). The BNC reduces molecular oxygen to 2 water molecules using 4 electrons from cytochrome c in the IMS and 4 protons from the mitochondrial matrix.</text>
</comment>
<comment type="catalytic activity">
    <reaction evidence="2">
        <text>4 Fe(II)-[cytochrome c] + O2 + 8 H(+)(in) = 4 Fe(III)-[cytochrome c] + 2 H2O + 4 H(+)(out)</text>
        <dbReference type="Rhea" id="RHEA:11436"/>
        <dbReference type="Rhea" id="RHEA-COMP:10350"/>
        <dbReference type="Rhea" id="RHEA-COMP:14399"/>
        <dbReference type="ChEBI" id="CHEBI:15377"/>
        <dbReference type="ChEBI" id="CHEBI:15378"/>
        <dbReference type="ChEBI" id="CHEBI:15379"/>
        <dbReference type="ChEBI" id="CHEBI:29033"/>
        <dbReference type="ChEBI" id="CHEBI:29034"/>
        <dbReference type="EC" id="7.1.1.9"/>
    </reaction>
    <physiologicalReaction direction="left-to-right" evidence="2">
        <dbReference type="Rhea" id="RHEA:11437"/>
    </physiologicalReaction>
</comment>
<comment type="subunit">
    <text evidence="1">Component of the cytochrome c oxidase (complex IV, CIV), a multisubunit enzyme composed of 14 subunits. The complex is composed of a catalytic core of 3 subunits MT-CO1, MT-CO2 and MT-CO3, encoded in the mitochondrial DNA, and 11 supernumerary subunits COX4I, COX5A, COX5B, COX6A, COX6B, COX6C, COX7A, COX7B, COX7C, COX8 and NDUFA4, which are encoded in the nuclear genome. The complex exists as a monomer or a dimer and forms supercomplexes (SCs) in the inner mitochondrial membrane with NADH-ubiquinone oxidoreductase (complex I, CI) and ubiquinol-cytochrome c oxidoreductase (cytochrome b-c1 complex, complex III, CIII), resulting in different assemblies (supercomplex SCI(1)III(2)IV(1) and megacomplex MCI(2)III(2)IV(2)).</text>
</comment>
<comment type="subcellular location">
    <subcellularLocation>
        <location evidence="1">Mitochondrion inner membrane</location>
        <topology evidence="1">Multi-pass membrane protein</topology>
    </subcellularLocation>
</comment>
<comment type="similarity">
    <text evidence="3">Belongs to the cytochrome c oxidase subunit 3 family.</text>
</comment>
<sequence length="261" mass="29759">MAHQAHSYHMVDPSPWPIFGATAALLTTSGLIMWFHYNSLYLLTLGLLSMFLVMIQWWRDIVRESTFQGHHTPTVQKGLRYGMILFITSEAFFFLGFFWAFFHSSLAPTPELGAQWPPTGINPLNPLEVPLLNTAILLASGVTVTWAHHSITESNRKQAIHALSLTIILGFYFTALQAMEYHEASFSIADGVYGSTFFVATGFHGLHVIIGSSFLTVCLLRLIKFHFTTNHHFGFEAAAWYWHFVDVIWLFLYMSIYWWGS</sequence>
<name>COX3_STRCA</name>
<accession>O21403</accession>
<accession>Q957X5</accession>
<evidence type="ECO:0000250" key="1">
    <source>
        <dbReference type="UniProtKB" id="P00415"/>
    </source>
</evidence>
<evidence type="ECO:0000250" key="2">
    <source>
        <dbReference type="UniProtKB" id="P00420"/>
    </source>
</evidence>
<evidence type="ECO:0000305" key="3"/>
<keyword id="KW-0472">Membrane</keyword>
<keyword id="KW-0496">Mitochondrion</keyword>
<keyword id="KW-0999">Mitochondrion inner membrane</keyword>
<keyword id="KW-1278">Translocase</keyword>
<keyword id="KW-0812">Transmembrane</keyword>
<keyword id="KW-1133">Transmembrane helix</keyword>
<proteinExistence type="inferred from homology"/>